<comment type="function">
    <text evidence="1">Allows the formation of correctly charged Gln-tRNA(Gln) through the transamidation of misacylated Glu-tRNA(Gln) in organisms which lack glutaminyl-tRNA synthetase. The reaction takes place in the presence of glutamine and ATP through an activated gamma-phospho-Glu-tRNA(Gln). The GatDE system is specific for glutamate and does not act on aspartate.</text>
</comment>
<comment type="catalytic activity">
    <reaction evidence="1">
        <text>L-glutamyl-tRNA(Gln) + L-glutamine + ATP + H2O = L-glutaminyl-tRNA(Gln) + L-glutamate + ADP + phosphate + H(+)</text>
        <dbReference type="Rhea" id="RHEA:17521"/>
        <dbReference type="Rhea" id="RHEA-COMP:9681"/>
        <dbReference type="Rhea" id="RHEA-COMP:9684"/>
        <dbReference type="ChEBI" id="CHEBI:15377"/>
        <dbReference type="ChEBI" id="CHEBI:15378"/>
        <dbReference type="ChEBI" id="CHEBI:29985"/>
        <dbReference type="ChEBI" id="CHEBI:30616"/>
        <dbReference type="ChEBI" id="CHEBI:43474"/>
        <dbReference type="ChEBI" id="CHEBI:58359"/>
        <dbReference type="ChEBI" id="CHEBI:78520"/>
        <dbReference type="ChEBI" id="CHEBI:78521"/>
        <dbReference type="ChEBI" id="CHEBI:456216"/>
    </reaction>
</comment>
<comment type="subunit">
    <text evidence="1">Heterodimer of GatD and GatE.</text>
</comment>
<comment type="similarity">
    <text evidence="1">Belongs to the GatB/GatE family. GatE subfamily.</text>
</comment>
<gene>
    <name evidence="1" type="primary">gatE</name>
    <name type="ordered locus">SSO0936</name>
</gene>
<proteinExistence type="inferred from homology"/>
<dbReference type="EC" id="6.3.5.-" evidence="1"/>
<dbReference type="EMBL" id="AE006641">
    <property type="protein sequence ID" value="AAK41212.1"/>
    <property type="molecule type" value="Genomic_DNA"/>
</dbReference>
<dbReference type="PIR" id="E90244">
    <property type="entry name" value="E90244"/>
</dbReference>
<dbReference type="RefSeq" id="WP_009992367.1">
    <property type="nucleotide sequence ID" value="NC_002754.1"/>
</dbReference>
<dbReference type="SMR" id="Q97ZH6"/>
<dbReference type="FunCoup" id="Q97ZH6">
    <property type="interactions" value="26"/>
</dbReference>
<dbReference type="STRING" id="273057.SSO0936"/>
<dbReference type="PaxDb" id="273057-SSO0936"/>
<dbReference type="EnsemblBacteria" id="AAK41212">
    <property type="protein sequence ID" value="AAK41212"/>
    <property type="gene ID" value="SSO0936"/>
</dbReference>
<dbReference type="GeneID" id="44129865"/>
<dbReference type="KEGG" id="sso:SSO0936"/>
<dbReference type="PATRIC" id="fig|273057.12.peg.932"/>
<dbReference type="eggNOG" id="arCOG01719">
    <property type="taxonomic scope" value="Archaea"/>
</dbReference>
<dbReference type="HOGENOM" id="CLU_030702_0_0_2"/>
<dbReference type="InParanoid" id="Q97ZH6"/>
<dbReference type="PhylomeDB" id="Q97ZH6"/>
<dbReference type="Proteomes" id="UP000001974">
    <property type="component" value="Chromosome"/>
</dbReference>
<dbReference type="GO" id="GO:0005737">
    <property type="term" value="C:cytoplasm"/>
    <property type="evidence" value="ECO:0007669"/>
    <property type="project" value="InterPro"/>
</dbReference>
<dbReference type="GO" id="GO:0004812">
    <property type="term" value="F:aminoacyl-tRNA ligase activity"/>
    <property type="evidence" value="ECO:0007669"/>
    <property type="project" value="InterPro"/>
</dbReference>
<dbReference type="GO" id="GO:0005524">
    <property type="term" value="F:ATP binding"/>
    <property type="evidence" value="ECO:0007669"/>
    <property type="project" value="UniProtKB-KW"/>
</dbReference>
<dbReference type="GO" id="GO:0050567">
    <property type="term" value="F:glutaminyl-tRNA synthase (glutamine-hydrolyzing) activity"/>
    <property type="evidence" value="ECO:0000318"/>
    <property type="project" value="GO_Central"/>
</dbReference>
<dbReference type="GO" id="GO:0070681">
    <property type="term" value="P:glutaminyl-tRNAGln biosynthesis via transamidation"/>
    <property type="evidence" value="ECO:0000318"/>
    <property type="project" value="GO_Central"/>
</dbReference>
<dbReference type="GO" id="GO:0006412">
    <property type="term" value="P:translation"/>
    <property type="evidence" value="ECO:0007669"/>
    <property type="project" value="UniProtKB-UniRule"/>
</dbReference>
<dbReference type="FunFam" id="1.10.150.380:FF:000002">
    <property type="entry name" value="Glutamyl-tRNA(Gln) amidotransferase subunit E"/>
    <property type="match status" value="1"/>
</dbReference>
<dbReference type="FunFam" id="3.30.1360.30:FF:000003">
    <property type="entry name" value="Glutamyl-tRNA(Gln) amidotransferase subunit E"/>
    <property type="match status" value="1"/>
</dbReference>
<dbReference type="Gene3D" id="1.10.10.410">
    <property type="match status" value="1"/>
</dbReference>
<dbReference type="Gene3D" id="3.30.1360.30">
    <property type="entry name" value="GAD-like domain"/>
    <property type="match status" value="1"/>
</dbReference>
<dbReference type="Gene3D" id="1.10.150.380">
    <property type="entry name" value="GatB domain, N-terminal subdomain"/>
    <property type="match status" value="1"/>
</dbReference>
<dbReference type="HAMAP" id="MF_00588">
    <property type="entry name" value="GatE"/>
    <property type="match status" value="1"/>
</dbReference>
<dbReference type="InterPro" id="IPR017959">
    <property type="entry name" value="Asn/Gln-tRNA_amidoTrfase_suB/E"/>
</dbReference>
<dbReference type="InterPro" id="IPR006075">
    <property type="entry name" value="Asn/Gln-tRNA_Trfase_suB/E_cat"/>
</dbReference>
<dbReference type="InterPro" id="IPR018027">
    <property type="entry name" value="Asn/Gln_amidotransferase"/>
</dbReference>
<dbReference type="InterPro" id="IPR003789">
    <property type="entry name" value="Asn/Gln_tRNA_amidoTrase-B-like"/>
</dbReference>
<dbReference type="InterPro" id="IPR004115">
    <property type="entry name" value="GAD-like_sf"/>
</dbReference>
<dbReference type="InterPro" id="IPR029351">
    <property type="entry name" value="GAD_dom"/>
</dbReference>
<dbReference type="InterPro" id="IPR042114">
    <property type="entry name" value="GatB_C_1"/>
</dbReference>
<dbReference type="InterPro" id="IPR023168">
    <property type="entry name" value="GatB_Yqey_C_2"/>
</dbReference>
<dbReference type="InterPro" id="IPR004414">
    <property type="entry name" value="GatE"/>
</dbReference>
<dbReference type="InterPro" id="IPR017958">
    <property type="entry name" value="Gln-tRNA_amidoTrfase_suB_CS"/>
</dbReference>
<dbReference type="InterPro" id="IPR014746">
    <property type="entry name" value="Gln_synth/guanido_kin_cat_dom"/>
</dbReference>
<dbReference type="NCBIfam" id="TIGR00134">
    <property type="entry name" value="gatE_arch"/>
    <property type="match status" value="1"/>
</dbReference>
<dbReference type="NCBIfam" id="NF003107">
    <property type="entry name" value="PRK04028.1"/>
    <property type="match status" value="1"/>
</dbReference>
<dbReference type="PANTHER" id="PTHR11659">
    <property type="entry name" value="GLUTAMYL-TRNA GLN AMIDOTRANSFERASE SUBUNIT B MITOCHONDRIAL AND PROKARYOTIC PET112-RELATED"/>
    <property type="match status" value="1"/>
</dbReference>
<dbReference type="PANTHER" id="PTHR11659:SF2">
    <property type="entry name" value="GLUTAMYL-TRNA(GLN) AMIDOTRANSFERASE SUBUNIT E"/>
    <property type="match status" value="1"/>
</dbReference>
<dbReference type="Pfam" id="PF02938">
    <property type="entry name" value="GAD"/>
    <property type="match status" value="1"/>
</dbReference>
<dbReference type="Pfam" id="PF02934">
    <property type="entry name" value="GatB_N"/>
    <property type="match status" value="1"/>
</dbReference>
<dbReference type="Pfam" id="PF02637">
    <property type="entry name" value="GatB_Yqey"/>
    <property type="match status" value="1"/>
</dbReference>
<dbReference type="SMART" id="SM00845">
    <property type="entry name" value="GatB_Yqey"/>
    <property type="match status" value="1"/>
</dbReference>
<dbReference type="SUPFAM" id="SSF55261">
    <property type="entry name" value="GAD domain-like"/>
    <property type="match status" value="1"/>
</dbReference>
<dbReference type="SUPFAM" id="SSF89095">
    <property type="entry name" value="GatB/YqeY motif"/>
    <property type="match status" value="1"/>
</dbReference>
<dbReference type="SUPFAM" id="SSF55931">
    <property type="entry name" value="Glutamine synthetase/guanido kinase"/>
    <property type="match status" value="1"/>
</dbReference>
<dbReference type="PROSITE" id="PS01234">
    <property type="entry name" value="GATB"/>
    <property type="match status" value="1"/>
</dbReference>
<evidence type="ECO:0000255" key="1">
    <source>
        <dbReference type="HAMAP-Rule" id="MF_00588"/>
    </source>
</evidence>
<evidence type="ECO:0000256" key="2">
    <source>
        <dbReference type="SAM" id="MobiDB-lite"/>
    </source>
</evidence>
<reference key="1">
    <citation type="journal article" date="2001" name="Proc. Natl. Acad. Sci. U.S.A.">
        <title>The complete genome of the crenarchaeon Sulfolobus solfataricus P2.</title>
        <authorList>
            <person name="She Q."/>
            <person name="Singh R.K."/>
            <person name="Confalonieri F."/>
            <person name="Zivanovic Y."/>
            <person name="Allard G."/>
            <person name="Awayez M.J."/>
            <person name="Chan-Weiher C.C.-Y."/>
            <person name="Clausen I.G."/>
            <person name="Curtis B.A."/>
            <person name="De Moors A."/>
            <person name="Erauso G."/>
            <person name="Fletcher C."/>
            <person name="Gordon P.M.K."/>
            <person name="Heikamp-de Jong I."/>
            <person name="Jeffries A.C."/>
            <person name="Kozera C.J."/>
            <person name="Medina N."/>
            <person name="Peng X."/>
            <person name="Thi-Ngoc H.P."/>
            <person name="Redder P."/>
            <person name="Schenk M.E."/>
            <person name="Theriault C."/>
            <person name="Tolstrup N."/>
            <person name="Charlebois R.L."/>
            <person name="Doolittle W.F."/>
            <person name="Duguet M."/>
            <person name="Gaasterland T."/>
            <person name="Garrett R.A."/>
            <person name="Ragan M.A."/>
            <person name="Sensen C.W."/>
            <person name="Van der Oost J."/>
        </authorList>
    </citation>
    <scope>NUCLEOTIDE SEQUENCE [LARGE SCALE GENOMIC DNA]</scope>
    <source>
        <strain>ATCC 35092 / DSM 1617 / JCM 11322 / P2</strain>
    </source>
</reference>
<protein>
    <recommendedName>
        <fullName evidence="1">Glutamyl-tRNA(Gln) amidotransferase subunit E</fullName>
        <shortName evidence="1">Glu-ADT subunit E</shortName>
        <ecNumber evidence="1">6.3.5.-</ecNumber>
    </recommendedName>
</protein>
<organism>
    <name type="scientific">Saccharolobus solfataricus (strain ATCC 35092 / DSM 1617 / JCM 11322 / P2)</name>
    <name type="common">Sulfolobus solfataricus</name>
    <dbReference type="NCBI Taxonomy" id="273057"/>
    <lineage>
        <taxon>Archaea</taxon>
        <taxon>Thermoproteota</taxon>
        <taxon>Thermoprotei</taxon>
        <taxon>Sulfolobales</taxon>
        <taxon>Sulfolobaceae</taxon>
        <taxon>Saccharolobus</taxon>
    </lineage>
</organism>
<keyword id="KW-0067">ATP-binding</keyword>
<keyword id="KW-0436">Ligase</keyword>
<keyword id="KW-0547">Nucleotide-binding</keyword>
<keyword id="KW-0648">Protein biosynthesis</keyword>
<keyword id="KW-1185">Reference proteome</keyword>
<accession>Q97ZH6</accession>
<sequence>MSELNYEELGLKVGLEIHQQLNTPHKLFCNCSTNLEEEYKLTLERYLRPALSELGEVDVAALFEWKKGKKYVYRIPITTSCLVEADEEPPHAINEEALKIALAIAMALNSNIVDEIYVMRKIVIDGSNTTGFQRTAIIALGGMLKDEEVSIQSIAVEEDAARKIDEGTDQVTYSLDRLGIPLIEISTGPDIRSPEQAERVALKIGQLLRMTGKVKRGIGTIRQDLNISIKGGTKIEIKGVQKLELIPDIVRYEAIRQFNLLKIKEELYRRGLTKELVLSNFVVKDVTELFKNTNSKIIKNGIEKGGLVYGIRAYKLKGVLGWELIPKKRRFGTEIADYVRALAGLGGLFHSDELPNYGITEEEINKVREALNATTEDALILIVGERERLDKAVEVIKDRILLAFDGIPKETRGALDDGTTKFLRPQPGSARMYPETDIPPRRIDEKLLEDAKKLVPESPESKMKRYIVLGLSEELAKEIIRDPRLDLFEELVNKYSPRVPPVVIASTITNTLKYVKSKGGDISKINEEDIEELIKSIYESRISKDSISEILVEYTTSKNVELKDIIRKYEVLPIEELEKIIDDIINSNLDEIRKRKDKAVNLIMSKVMSKVKGRADGKIVLELIRSRLKNVIE</sequence>
<name>GATE_SACS2</name>
<feature type="chain" id="PRO_0000140082" description="Glutamyl-tRNA(Gln) amidotransferase subunit E">
    <location>
        <begin position="1"/>
        <end position="633"/>
    </location>
</feature>
<feature type="region of interest" description="Disordered" evidence="2">
    <location>
        <begin position="415"/>
        <end position="437"/>
    </location>
</feature>